<comment type="function">
    <text evidence="2">Probable core component of the endosomal sorting required for transport complex III (ESCRT-III) which is involved in multivesicular bodies (MVBs) formation and sorting of endosomal cargo proteins into MVBs. MVBs contain intraluminal vesicles (ILVs) that are generated by invagination and scission from the limiting membrane of the endosome and mostly are delivered to lysosomes enabling degradation of membrane proteins, such as stimulated growth factor receptors, lysosomal enzymes and lipids. The MVB pathway appears to require the sequential function of ESCRT-O, -I,-II and -III complexes. ESCRT-III proteins mostly dissociate from the invaginating membrane before the ILV is released. The ESCRT machinery also functions in topologically equivalent membrane fission events, such as the terminal stages of cytokinesis and the budding of enveloped viruses (lentiviruses). ESCRT-III proteins are believed to mediate the necessary vesicle extrusion and/or membrane fission activities, possibly in conjunction with the AAA ATPase VPS4. When overexpressed, membrane-assembled circular arrays of CHMP4A filaments can promote or stabilize negative curvature and outward budding. CHMP4A/B/C are required for the exosomal release of SDCBP, CD63 and syndecan (By similarity).</text>
</comment>
<comment type="subunit">
    <text evidence="1">Probable core component of the endosomal sorting required for transport complex III (ESCRT-III). ESCRT-III components are thought to multimerize to form a flat lattice on the perimeter membrane of the endosome. Several assembly forms of ESCRT-III may exist that interact and act sequentially. Self-associates; overexpression leads to the assembly of filaments that curve and associate to create circular rings. Interacts with CHMP2A. Interacts with CHMP3; the interaction requires the release of CHMP4A autoinhibition. Interacts with CHMP4B. Interacts with CHMP4C. Interacts with CHMP6. Interacts with VPS4A. Interacts with PDCD6IP; the interaction is direct (By similarity).</text>
</comment>
<comment type="subcellular location">
    <subcellularLocation>
        <location evidence="1">Cytoplasmic vesicle membrane</location>
    </subcellularLocation>
    <subcellularLocation>
        <location evidence="5">Late endosome membrane</location>
        <topology evidence="5">Peripheral membrane protein</topology>
    </subcellularLocation>
    <text evidence="1">Membrane-associated. Localizes to large vesicle-like structures. Localizes to the midbody of dividing cells. Localized in two distinct rings on either side of the Fleming body (By similarity).</text>
</comment>
<comment type="domain">
    <text evidence="1">The acidic C-terminus and the basic N-termminus are thought to render the protein in a closed, soluble and inactive conformation through an autoinhibitory intramolecular interaction. The open and active conformation, which enables membrane binding and oligomerization, is achieved by interaction with other cellular binding partners, probably including other ESCRT components (By similarity).</text>
</comment>
<comment type="similarity">
    <text evidence="5">Belongs to the SNF7 family.</text>
</comment>
<accession>A2VDY3</accession>
<evidence type="ECO:0000250" key="1"/>
<evidence type="ECO:0000250" key="2">
    <source>
        <dbReference type="UniProtKB" id="Q9BY43"/>
    </source>
</evidence>
<evidence type="ECO:0000255" key="3"/>
<evidence type="ECO:0000256" key="4">
    <source>
        <dbReference type="SAM" id="MobiDB-lite"/>
    </source>
</evidence>
<evidence type="ECO:0000305" key="5"/>
<dbReference type="EMBL" id="BC133471">
    <property type="protein sequence ID" value="AAI33472.2"/>
    <property type="molecule type" value="mRNA"/>
</dbReference>
<dbReference type="RefSeq" id="NP_001121976.1">
    <property type="nucleotide sequence ID" value="NM_001128504.2"/>
</dbReference>
<dbReference type="SMR" id="A2VDY3"/>
<dbReference type="FunCoup" id="A2VDY3">
    <property type="interactions" value="2681"/>
</dbReference>
<dbReference type="STRING" id="9913.ENSBTAP00000008352"/>
<dbReference type="PaxDb" id="9913-ENSBTAP00000008352"/>
<dbReference type="GeneID" id="613647"/>
<dbReference type="KEGG" id="bta:613647"/>
<dbReference type="CTD" id="29082"/>
<dbReference type="VEuPathDB" id="HostDB:ENSBTAG00000039415"/>
<dbReference type="eggNOG" id="KOG1656">
    <property type="taxonomic scope" value="Eukaryota"/>
</dbReference>
<dbReference type="HOGENOM" id="CLU_071097_0_0_1"/>
<dbReference type="InParanoid" id="A2VDY3"/>
<dbReference type="OMA" id="RCPKEGL"/>
<dbReference type="OrthoDB" id="5592979at2759"/>
<dbReference type="TreeFam" id="TF314269"/>
<dbReference type="Reactome" id="R-BTA-1632852">
    <property type="pathway name" value="Macroautophagy"/>
</dbReference>
<dbReference type="Reactome" id="R-BTA-5620971">
    <property type="pathway name" value="Pyroptosis"/>
</dbReference>
<dbReference type="Reactome" id="R-BTA-917729">
    <property type="pathway name" value="Endosomal Sorting Complex Required For Transport (ESCRT)"/>
</dbReference>
<dbReference type="Reactome" id="R-BTA-9668328">
    <property type="pathway name" value="Sealing of the nuclear envelope (NE) by ESCRT-III"/>
</dbReference>
<dbReference type="Proteomes" id="UP000009136">
    <property type="component" value="Chromosome 10"/>
</dbReference>
<dbReference type="Bgee" id="ENSBTAG00000039415">
    <property type="expression patterns" value="Expressed in pons and 104 other cell types or tissues"/>
</dbReference>
<dbReference type="GO" id="GO:0009898">
    <property type="term" value="C:cytoplasmic side of plasma membrane"/>
    <property type="evidence" value="ECO:0000318"/>
    <property type="project" value="GO_Central"/>
</dbReference>
<dbReference type="GO" id="GO:0000815">
    <property type="term" value="C:ESCRT III complex"/>
    <property type="evidence" value="ECO:0000318"/>
    <property type="project" value="GO_Central"/>
</dbReference>
<dbReference type="GO" id="GO:0031902">
    <property type="term" value="C:late endosome membrane"/>
    <property type="evidence" value="ECO:0007669"/>
    <property type="project" value="UniProtKB-SubCell"/>
</dbReference>
<dbReference type="GO" id="GO:0005771">
    <property type="term" value="C:multivesicular body"/>
    <property type="evidence" value="ECO:0000318"/>
    <property type="project" value="GO_Central"/>
</dbReference>
<dbReference type="GO" id="GO:0008289">
    <property type="term" value="F:lipid binding"/>
    <property type="evidence" value="ECO:0007669"/>
    <property type="project" value="UniProtKB-KW"/>
</dbReference>
<dbReference type="GO" id="GO:0032511">
    <property type="term" value="P:late endosome to vacuole transport via multivesicular body sorting pathway"/>
    <property type="evidence" value="ECO:0000318"/>
    <property type="project" value="GO_Central"/>
</dbReference>
<dbReference type="GO" id="GO:0015031">
    <property type="term" value="P:protein transport"/>
    <property type="evidence" value="ECO:0007669"/>
    <property type="project" value="UniProtKB-KW"/>
</dbReference>
<dbReference type="GO" id="GO:0006900">
    <property type="term" value="P:vesicle budding from membrane"/>
    <property type="evidence" value="ECO:0000318"/>
    <property type="project" value="GO_Central"/>
</dbReference>
<dbReference type="FunFam" id="1.10.287.1060:FF:000001">
    <property type="entry name" value="Charged multivesicular body protein 4b"/>
    <property type="match status" value="1"/>
</dbReference>
<dbReference type="Gene3D" id="6.10.250.1710">
    <property type="match status" value="1"/>
</dbReference>
<dbReference type="Gene3D" id="1.10.287.1060">
    <property type="entry name" value="ESAT-6-like"/>
    <property type="match status" value="1"/>
</dbReference>
<dbReference type="InterPro" id="IPR005024">
    <property type="entry name" value="Snf7_fam"/>
</dbReference>
<dbReference type="PANTHER" id="PTHR22761">
    <property type="entry name" value="CHARGED MULTIVESICULAR BODY PROTEIN"/>
    <property type="match status" value="1"/>
</dbReference>
<dbReference type="PANTHER" id="PTHR22761:SF14">
    <property type="entry name" value="CHARGED MULTIVESICULAR BODY PROTEIN 4A"/>
    <property type="match status" value="1"/>
</dbReference>
<dbReference type="Pfam" id="PF03357">
    <property type="entry name" value="Snf7"/>
    <property type="match status" value="1"/>
</dbReference>
<proteinExistence type="evidence at transcript level"/>
<feature type="chain" id="PRO_0000328394" description="Charged multivesicular body protein 4a">
    <location>
        <begin position="1"/>
        <end position="222"/>
    </location>
</feature>
<feature type="region of interest" description="Intramolecular interaction with C-terminus" evidence="1">
    <location>
        <begin position="1"/>
        <end position="150"/>
    </location>
</feature>
<feature type="region of interest" description="Interaction with phosphoinosides" evidence="1">
    <location>
        <begin position="1"/>
        <end position="116"/>
    </location>
</feature>
<feature type="region of interest" description="Disordered" evidence="4">
    <location>
        <begin position="1"/>
        <end position="21"/>
    </location>
</feature>
<feature type="region of interest" description="Intramolecular interaction with N-terminus" evidence="1">
    <location>
        <begin position="151"/>
        <end position="222"/>
    </location>
</feature>
<feature type="region of interest" description="Disordered" evidence="4">
    <location>
        <begin position="177"/>
        <end position="222"/>
    </location>
</feature>
<feature type="coiled-coil region" evidence="3">
    <location>
        <begin position="20"/>
        <end position="105"/>
    </location>
</feature>
<feature type="coiled-coil region" evidence="3">
    <location>
        <begin position="155"/>
        <end position="180"/>
    </location>
</feature>
<feature type="modified residue" description="Phosphoserine" evidence="2">
    <location>
        <position position="196"/>
    </location>
</feature>
<name>CHM4A_BOVIN</name>
<keyword id="KW-0175">Coiled coil</keyword>
<keyword id="KW-0968">Cytoplasmic vesicle</keyword>
<keyword id="KW-0967">Endosome</keyword>
<keyword id="KW-0446">Lipid-binding</keyword>
<keyword id="KW-0472">Membrane</keyword>
<keyword id="KW-0597">Phosphoprotein</keyword>
<keyword id="KW-0653">Protein transport</keyword>
<keyword id="KW-1185">Reference proteome</keyword>
<keyword id="KW-0813">Transport</keyword>
<gene>
    <name type="primary">CHMP4A</name>
</gene>
<organism>
    <name type="scientific">Bos taurus</name>
    <name type="common">Bovine</name>
    <dbReference type="NCBI Taxonomy" id="9913"/>
    <lineage>
        <taxon>Eukaryota</taxon>
        <taxon>Metazoa</taxon>
        <taxon>Chordata</taxon>
        <taxon>Craniata</taxon>
        <taxon>Vertebrata</taxon>
        <taxon>Euteleostomi</taxon>
        <taxon>Mammalia</taxon>
        <taxon>Eutheria</taxon>
        <taxon>Laurasiatheria</taxon>
        <taxon>Artiodactyla</taxon>
        <taxon>Ruminantia</taxon>
        <taxon>Pecora</taxon>
        <taxon>Bovidae</taxon>
        <taxon>Bovinae</taxon>
        <taxon>Bos</taxon>
    </lineage>
</organism>
<protein>
    <recommendedName>
        <fullName>Charged multivesicular body protein 4a</fullName>
    </recommendedName>
    <alternativeName>
        <fullName>Chromatin-modifying protein 4a</fullName>
        <shortName>CHMP4a</shortName>
    </alternativeName>
</protein>
<reference key="1">
    <citation type="submission" date="2007-02" db="EMBL/GenBank/DDBJ databases">
        <authorList>
            <consortium name="NIH - Mammalian Gene Collection (MGC) project"/>
        </authorList>
    </citation>
    <scope>NUCLEOTIDE SEQUENCE [LARGE SCALE MRNA]</scope>
    <source>
        <strain>Hereford</strain>
        <tissue>Fetal lung</tissue>
    </source>
</reference>
<sequence length="222" mass="24948">MSGLGRLFGRGKKEKGPTPEEAIQKLKETEKILIKKQEFLEQKIEQELQAAKKHGTKNKRAALQALRRKKRLEQQLAQTDGTLSTLEFQREAIENATTNAEVLRTMELAAQGLKKAYQDMDIDKVDELMADITEQQEVAQQISDAISRPVGFGDDVDEDELLEELEELEQEELARELLHVGDEEEEPPVALPSAPSTHLPAEPAPKADEDEAELKQLAEWVS</sequence>